<sequence length="164" mass="17485">MAKNNVVKAQGTDLYFIDPDTHVVMNAGCITSLSGIDTSIDQIETTCLNETARSYVAGLATPGTATFSINTNPQDPVHIRLLELKNAGVSLDWAVGWSDGTSAPTAVLDSSGEYDFDVPADRSWLLFEGYMNSFSFEFAQNAVVTSSIGIQVSGEPVLIPKSTS</sequence>
<evidence type="ECO:0000269" key="1">
    <source>
    </source>
</evidence>
<evidence type="ECO:0000303" key="2">
    <source>
    </source>
</evidence>
<evidence type="ECO:0000305" key="3"/>
<accession>P85503</accession>
<accession>B5WZT1</accession>
<protein>
    <recommendedName>
        <fullName evidence="2">Structural protein 3</fullName>
    </recommendedName>
    <alternativeName>
        <fullName evidence="2">ORF15 protein</fullName>
    </alternativeName>
</protein>
<proteinExistence type="evidence at protein level"/>
<organism>
    <name type="scientific">Pseudomonas phage PAJU2</name>
    <dbReference type="NCBI Taxonomy" id="504346"/>
    <lineage>
        <taxon>Viruses</taxon>
        <taxon>Duplodnaviria</taxon>
        <taxon>Heunggongvirae</taxon>
        <taxon>Uroviricota</taxon>
        <taxon>Caudoviricetes</taxon>
        <taxon>Detrevirus</taxon>
    </lineage>
</organism>
<reference evidence="3" key="1">
    <citation type="journal article" date="2009" name="Virus Res.">
        <title>Characteristics of a novel Pseudomonas aeruginosa bacteriophage, PAJU2, which is genetically related to bacteriophage D3.</title>
        <authorList>
            <person name="Uchiyama J."/>
            <person name="Rashel M."/>
            <person name="Matsumoto T."/>
            <person name="Sumiyama Y."/>
            <person name="Wakiguchi H."/>
            <person name="Matsuzaki S."/>
        </authorList>
    </citation>
    <scope>NUCLEOTIDE SEQUENCE [GENOMIC DNA]</scope>
    <scope>PROTEIN SEQUENCE OF 2-18</scope>
    <scope>FUNCTION</scope>
</reference>
<name>STRU3_BPPAJ</name>
<dbReference type="EMBL" id="AP009624">
    <property type="protein sequence ID" value="BAG74999.1"/>
    <property type="molecule type" value="Genomic_DNA"/>
</dbReference>
<dbReference type="RefSeq" id="YP_002284349.1">
    <property type="nucleotide sequence ID" value="NC_011373.1"/>
</dbReference>
<dbReference type="SMR" id="P85503"/>
<dbReference type="GeneID" id="6989693"/>
<dbReference type="KEGG" id="vg:6989693"/>
<dbReference type="OrthoDB" id="10298at10239"/>
<dbReference type="Proteomes" id="UP000001041">
    <property type="component" value="Genome"/>
</dbReference>
<dbReference type="GO" id="GO:0044423">
    <property type="term" value="C:virion component"/>
    <property type="evidence" value="ECO:0007669"/>
    <property type="project" value="UniProtKB-KW"/>
</dbReference>
<dbReference type="Gene3D" id="4.10.410.40">
    <property type="match status" value="1"/>
</dbReference>
<dbReference type="InterPro" id="IPR032495">
    <property type="entry name" value="Phage_TTP_11"/>
</dbReference>
<dbReference type="Pfam" id="PF16460">
    <property type="entry name" value="Phage_TTP_11"/>
    <property type="match status" value="1"/>
</dbReference>
<comment type="function">
    <text evidence="1">Structural protein.</text>
</comment>
<comment type="subcellular location">
    <subcellularLocation>
        <location evidence="3">Virion</location>
    </subcellularLocation>
</comment>
<organismHost>
    <name type="scientific">Pseudomonas aeruginosa</name>
    <dbReference type="NCBI Taxonomy" id="287"/>
</organismHost>
<feature type="initiator methionine" description="Removed" evidence="1">
    <location>
        <position position="1"/>
    </location>
</feature>
<feature type="chain" id="PRO_0000326459" description="Structural protein 3" evidence="1">
    <location>
        <begin position="2"/>
        <end position="164"/>
    </location>
</feature>
<feature type="sequence conflict" description="In Ref. 1; AA Sequence." evidence="3" ref="1">
    <original>V</original>
    <variation>P</variation>
    <location>
        <position position="7"/>
    </location>
</feature>
<feature type="sequence conflict" description="In Ref. 1; AA Sequence." evidence="3" ref="1">
    <location>
        <position position="17"/>
    </location>
</feature>
<keyword id="KW-0903">Direct protein sequencing</keyword>
<keyword id="KW-1185">Reference proteome</keyword>
<keyword id="KW-0946">Virion</keyword>